<accession>Q72HA9</accession>
<reference key="1">
    <citation type="journal article" date="2004" name="Nat. Biotechnol.">
        <title>The genome sequence of the extreme thermophile Thermus thermophilus.</title>
        <authorList>
            <person name="Henne A."/>
            <person name="Brueggemann H."/>
            <person name="Raasch C."/>
            <person name="Wiezer A."/>
            <person name="Hartsch T."/>
            <person name="Liesegang H."/>
            <person name="Johann A."/>
            <person name="Lienard T."/>
            <person name="Gohl O."/>
            <person name="Martinez-Arias R."/>
            <person name="Jacobi C."/>
            <person name="Starkuviene V."/>
            <person name="Schlenczeck S."/>
            <person name="Dencker S."/>
            <person name="Huber R."/>
            <person name="Klenk H.-P."/>
            <person name="Kramer W."/>
            <person name="Merkl R."/>
            <person name="Gottschalk G."/>
            <person name="Fritz H.-J."/>
        </authorList>
    </citation>
    <scope>NUCLEOTIDE SEQUENCE [LARGE SCALE GENOMIC DNA]</scope>
    <source>
        <strain>ATCC BAA-163 / DSM 7039 / HB27</strain>
    </source>
</reference>
<reference key="2">
    <citation type="journal article" date="2015" name="J. Biol. Chem.">
        <title>Structural insight into amino group-carrier protein-mediated lysine biosynthesis: crystal structure of the LysZ.LysW complex from Thermus thermophilus.</title>
        <authorList>
            <person name="Yoshida A."/>
            <person name="Tomita T."/>
            <person name="Fujimura T."/>
            <person name="Nishiyama C."/>
            <person name="Kuzuyama T."/>
            <person name="Nishiyama M."/>
        </authorList>
    </citation>
    <scope>FUNCTION</scope>
    <scope>CATALYTIC ACTIVITY</scope>
</reference>
<gene>
    <name evidence="1" type="primary">argB</name>
    <name evidence="4" type="ordered locus">TT_C1586</name>
</gene>
<dbReference type="EC" id="2.7.2.8" evidence="1 2"/>
<dbReference type="EMBL" id="AE017221">
    <property type="protein sequence ID" value="AAS81928.1"/>
    <property type="molecule type" value="Genomic_DNA"/>
</dbReference>
<dbReference type="RefSeq" id="WP_011173958.1">
    <property type="nucleotide sequence ID" value="NC_005835.1"/>
</dbReference>
<dbReference type="SMR" id="Q72HA9"/>
<dbReference type="KEGG" id="tth:TT_C1586"/>
<dbReference type="eggNOG" id="COG0548">
    <property type="taxonomic scope" value="Bacteria"/>
</dbReference>
<dbReference type="HOGENOM" id="CLU_053680_1_0_0"/>
<dbReference type="OrthoDB" id="9803155at2"/>
<dbReference type="UniPathway" id="UPA00068">
    <property type="reaction ID" value="UER00107"/>
</dbReference>
<dbReference type="Proteomes" id="UP000000592">
    <property type="component" value="Chromosome"/>
</dbReference>
<dbReference type="GO" id="GO:0005737">
    <property type="term" value="C:cytoplasm"/>
    <property type="evidence" value="ECO:0007669"/>
    <property type="project" value="UniProtKB-SubCell"/>
</dbReference>
<dbReference type="GO" id="GO:0003991">
    <property type="term" value="F:acetylglutamate kinase activity"/>
    <property type="evidence" value="ECO:0007669"/>
    <property type="project" value="UniProtKB-UniRule"/>
</dbReference>
<dbReference type="GO" id="GO:0005524">
    <property type="term" value="F:ATP binding"/>
    <property type="evidence" value="ECO:0007669"/>
    <property type="project" value="UniProtKB-UniRule"/>
</dbReference>
<dbReference type="GO" id="GO:0042450">
    <property type="term" value="P:arginine biosynthetic process via ornithine"/>
    <property type="evidence" value="ECO:0007669"/>
    <property type="project" value="UniProtKB-UniRule"/>
</dbReference>
<dbReference type="GO" id="GO:0006526">
    <property type="term" value="P:L-arginine biosynthetic process"/>
    <property type="evidence" value="ECO:0007669"/>
    <property type="project" value="UniProtKB-UniPathway"/>
</dbReference>
<dbReference type="CDD" id="cd04238">
    <property type="entry name" value="AAK_NAGK-like"/>
    <property type="match status" value="1"/>
</dbReference>
<dbReference type="Gene3D" id="3.40.1160.10">
    <property type="entry name" value="Acetylglutamate kinase-like"/>
    <property type="match status" value="1"/>
</dbReference>
<dbReference type="HAMAP" id="MF_00082">
    <property type="entry name" value="ArgB"/>
    <property type="match status" value="1"/>
</dbReference>
<dbReference type="InterPro" id="IPR036393">
    <property type="entry name" value="AceGlu_kinase-like_sf"/>
</dbReference>
<dbReference type="InterPro" id="IPR004662">
    <property type="entry name" value="AcgluKinase_fam"/>
</dbReference>
<dbReference type="InterPro" id="IPR037528">
    <property type="entry name" value="ArgB"/>
</dbReference>
<dbReference type="InterPro" id="IPR001048">
    <property type="entry name" value="Asp/Glu/Uridylate_kinase"/>
</dbReference>
<dbReference type="NCBIfam" id="TIGR00761">
    <property type="entry name" value="argB"/>
    <property type="match status" value="1"/>
</dbReference>
<dbReference type="PANTHER" id="PTHR23342">
    <property type="entry name" value="N-ACETYLGLUTAMATE SYNTHASE"/>
    <property type="match status" value="1"/>
</dbReference>
<dbReference type="PANTHER" id="PTHR23342:SF0">
    <property type="entry name" value="N-ACETYLGLUTAMATE SYNTHASE, MITOCHONDRIAL"/>
    <property type="match status" value="1"/>
</dbReference>
<dbReference type="Pfam" id="PF00696">
    <property type="entry name" value="AA_kinase"/>
    <property type="match status" value="1"/>
</dbReference>
<dbReference type="PIRSF" id="PIRSF000728">
    <property type="entry name" value="NAGK"/>
    <property type="match status" value="1"/>
</dbReference>
<dbReference type="SUPFAM" id="SSF53633">
    <property type="entry name" value="Carbamate kinase-like"/>
    <property type="match status" value="1"/>
</dbReference>
<feature type="chain" id="PRO_0000438990" description="Acetylglutamate kinase">
    <location>
        <begin position="1"/>
        <end position="248"/>
    </location>
</feature>
<feature type="binding site" evidence="1">
    <location>
        <begin position="36"/>
        <end position="37"/>
    </location>
    <ligand>
        <name>substrate</name>
    </ligand>
</feature>
<feature type="binding site" evidence="1">
    <location>
        <position position="58"/>
    </location>
    <ligand>
        <name>substrate</name>
    </ligand>
</feature>
<feature type="binding site" evidence="1">
    <location>
        <position position="147"/>
    </location>
    <ligand>
        <name>substrate</name>
    </ligand>
</feature>
<feature type="site" description="Transition state stabilizer" evidence="1">
    <location>
        <position position="8"/>
    </location>
</feature>
<feature type="site" description="Transition state stabilizer" evidence="1">
    <location>
        <position position="209"/>
    </location>
</feature>
<sequence>MSEALLVKVGGSLRGAEALLDELAAYPGPLVLVHGGGPEIGAWLGRLGYESRFVGGLRVTPPEQLEVVEMALYLTGKRLAEGLSRRGRKALALSGRDALCLKGRALPELGRVGEVVEVEVGLLQDLLAKGYTPLLAPIALDAEGPLNVNADTAAGAVAGALGWPAVFLTDVEGVYRDPKDPRTRFPRLTPKEVEALKGEGVIQGGMIPKVEAALSALRAGAPWAAIAKGERGVLEAVLRGEAGTRFTL</sequence>
<proteinExistence type="evidence at protein level"/>
<name>ARGB_THET2</name>
<comment type="function">
    <text evidence="1 2">Catalyzes the ATP-dependent phosphorylation of N-acetyl-L-glutamate.</text>
</comment>
<comment type="catalytic activity">
    <reaction evidence="1 2">
        <text>N-acetyl-L-glutamate + ATP = N-acetyl-L-glutamyl 5-phosphate + ADP</text>
        <dbReference type="Rhea" id="RHEA:14629"/>
        <dbReference type="ChEBI" id="CHEBI:30616"/>
        <dbReference type="ChEBI" id="CHEBI:44337"/>
        <dbReference type="ChEBI" id="CHEBI:57936"/>
        <dbReference type="ChEBI" id="CHEBI:456216"/>
        <dbReference type="EC" id="2.7.2.8"/>
    </reaction>
</comment>
<comment type="pathway">
    <text evidence="1">Amino-acid biosynthesis; L-arginine biosynthesis; N(2)-acetyl-L-ornithine from L-glutamate: step 2/4.</text>
</comment>
<comment type="subcellular location">
    <subcellularLocation>
        <location evidence="1">Cytoplasm</location>
    </subcellularLocation>
</comment>
<comment type="similarity">
    <text evidence="1">Belongs to the acetylglutamate kinase family. ArgB subfamily.</text>
</comment>
<keyword id="KW-0028">Amino-acid biosynthesis</keyword>
<keyword id="KW-0055">Arginine biosynthesis</keyword>
<keyword id="KW-0067">ATP-binding</keyword>
<keyword id="KW-0963">Cytoplasm</keyword>
<keyword id="KW-0418">Kinase</keyword>
<keyword id="KW-0547">Nucleotide-binding</keyword>
<keyword id="KW-0808">Transferase</keyword>
<organism>
    <name type="scientific">Thermus thermophilus (strain ATCC BAA-163 / DSM 7039 / HB27)</name>
    <dbReference type="NCBI Taxonomy" id="262724"/>
    <lineage>
        <taxon>Bacteria</taxon>
        <taxon>Thermotogati</taxon>
        <taxon>Deinococcota</taxon>
        <taxon>Deinococci</taxon>
        <taxon>Thermales</taxon>
        <taxon>Thermaceae</taxon>
        <taxon>Thermus</taxon>
    </lineage>
</organism>
<protein>
    <recommendedName>
        <fullName evidence="1">Acetylglutamate kinase</fullName>
        <ecNumber evidence="1 2">2.7.2.8</ecNumber>
    </recommendedName>
    <alternativeName>
        <fullName evidence="1">N-acetyl-L-glutamate 5-phosphotransferase</fullName>
    </alternativeName>
    <alternativeName>
        <fullName evidence="1">NAG kinase</fullName>
        <shortName evidence="1 3">NAGK</shortName>
    </alternativeName>
</protein>
<evidence type="ECO:0000255" key="1">
    <source>
        <dbReference type="HAMAP-Rule" id="MF_00082"/>
    </source>
</evidence>
<evidence type="ECO:0000269" key="2">
    <source>
    </source>
</evidence>
<evidence type="ECO:0000303" key="3">
    <source>
    </source>
</evidence>
<evidence type="ECO:0000312" key="4">
    <source>
        <dbReference type="EMBL" id="AAS81928.1"/>
    </source>
</evidence>